<evidence type="ECO:0000250" key="1">
    <source>
        <dbReference type="UniProtKB" id="Q9SWS1"/>
    </source>
</evidence>
<evidence type="ECO:0000255" key="2"/>
<evidence type="ECO:0000255" key="3">
    <source>
        <dbReference type="PROSITE-ProRule" id="PRU00242"/>
    </source>
</evidence>
<evidence type="ECO:0000256" key="4">
    <source>
        <dbReference type="SAM" id="MobiDB-lite"/>
    </source>
</evidence>
<evidence type="ECO:0000305" key="5"/>
<dbReference type="EMBL" id="AC004669">
    <property type="protein sequence ID" value="AAC20723.1"/>
    <property type="molecule type" value="Genomic_DNA"/>
</dbReference>
<dbReference type="EMBL" id="CP002685">
    <property type="protein sequence ID" value="AEC08453.1"/>
    <property type="molecule type" value="Genomic_DNA"/>
</dbReference>
<dbReference type="EMBL" id="BT010412">
    <property type="protein sequence ID" value="AAQ62413.1"/>
    <property type="molecule type" value="mRNA"/>
</dbReference>
<dbReference type="EMBL" id="AK176781">
    <property type="protein sequence ID" value="BAD44544.1"/>
    <property type="molecule type" value="mRNA"/>
</dbReference>
<dbReference type="PIR" id="H84713">
    <property type="entry name" value="H84713"/>
</dbReference>
<dbReference type="RefSeq" id="NP_180646.1">
    <property type="nucleotide sequence ID" value="NM_128641.2"/>
</dbReference>
<dbReference type="SMR" id="O80854"/>
<dbReference type="FunCoup" id="O80854">
    <property type="interactions" value="26"/>
</dbReference>
<dbReference type="STRING" id="3702.O80854"/>
<dbReference type="PaxDb" id="3702-AT2G30890.1"/>
<dbReference type="EnsemblPlants" id="AT2G30890.1">
    <property type="protein sequence ID" value="AT2G30890.1"/>
    <property type="gene ID" value="AT2G30890"/>
</dbReference>
<dbReference type="GeneID" id="817639"/>
<dbReference type="Gramene" id="AT2G30890.1">
    <property type="protein sequence ID" value="AT2G30890.1"/>
    <property type="gene ID" value="AT2G30890"/>
</dbReference>
<dbReference type="KEGG" id="ath:AT2G30890"/>
<dbReference type="Araport" id="AT2G30890"/>
<dbReference type="TAIR" id="AT2G30890"/>
<dbReference type="eggNOG" id="KOG4293">
    <property type="taxonomic scope" value="Eukaryota"/>
</dbReference>
<dbReference type="HOGENOM" id="CLU_069483_0_0_1"/>
<dbReference type="InParanoid" id="O80854"/>
<dbReference type="OMA" id="RIVFYVH"/>
<dbReference type="PhylomeDB" id="O80854"/>
<dbReference type="PRO" id="PR:O80854"/>
<dbReference type="Proteomes" id="UP000006548">
    <property type="component" value="Chromosome 2"/>
</dbReference>
<dbReference type="ExpressionAtlas" id="O80854">
    <property type="expression patterns" value="baseline and differential"/>
</dbReference>
<dbReference type="GO" id="GO:0016020">
    <property type="term" value="C:membrane"/>
    <property type="evidence" value="ECO:0007669"/>
    <property type="project" value="UniProtKB-SubCell"/>
</dbReference>
<dbReference type="GO" id="GO:0046872">
    <property type="term" value="F:metal ion binding"/>
    <property type="evidence" value="ECO:0007669"/>
    <property type="project" value="UniProtKB-KW"/>
</dbReference>
<dbReference type="GO" id="GO:0140575">
    <property type="term" value="F:transmembrane monodehydroascorbate reductase activity"/>
    <property type="evidence" value="ECO:0007669"/>
    <property type="project" value="InterPro"/>
</dbReference>
<dbReference type="CDD" id="cd08760">
    <property type="entry name" value="Cyt_b561_FRRS1_like"/>
    <property type="match status" value="1"/>
</dbReference>
<dbReference type="Gene3D" id="1.20.120.1770">
    <property type="match status" value="1"/>
</dbReference>
<dbReference type="InterPro" id="IPR045150">
    <property type="entry name" value="CYB561D1/2"/>
</dbReference>
<dbReference type="InterPro" id="IPR006593">
    <property type="entry name" value="Cyt_b561/ferric_Rdtase_TM"/>
</dbReference>
<dbReference type="PANTHER" id="PTHR15422:SF24">
    <property type="entry name" value="DOMON RELATED DOMAIN-CONTAINING PROTEIN"/>
    <property type="match status" value="1"/>
</dbReference>
<dbReference type="PANTHER" id="PTHR15422">
    <property type="entry name" value="OS05G0565100 PROTEIN"/>
    <property type="match status" value="1"/>
</dbReference>
<dbReference type="Pfam" id="PF03188">
    <property type="entry name" value="Cytochrom_B561"/>
    <property type="match status" value="1"/>
</dbReference>
<dbReference type="SMART" id="SM00665">
    <property type="entry name" value="B561"/>
    <property type="match status" value="1"/>
</dbReference>
<dbReference type="PROSITE" id="PS50939">
    <property type="entry name" value="CYTOCHROME_B561"/>
    <property type="match status" value="1"/>
</dbReference>
<protein>
    <recommendedName>
        <fullName>Cytochrome b561 domain-containing protein At2g30890</fullName>
    </recommendedName>
    <alternativeName>
        <fullName>Protein b561A.tha12</fullName>
    </alternativeName>
</protein>
<gene>
    <name type="ordered locus">At2g30890</name>
    <name type="ORF">F7F1.10</name>
</gene>
<comment type="cofactor">
    <cofactor evidence="1">
        <name>heme b</name>
        <dbReference type="ChEBI" id="CHEBI:60344"/>
    </cofactor>
    <text evidence="1">Binds 2 heme b groups non-covalently.</text>
</comment>
<comment type="subcellular location">
    <subcellularLocation>
        <location evidence="5">Membrane</location>
        <topology evidence="5">Multi-pass membrane protein</topology>
    </subcellularLocation>
</comment>
<organism>
    <name type="scientific">Arabidopsis thaliana</name>
    <name type="common">Mouse-ear cress</name>
    <dbReference type="NCBI Taxonomy" id="3702"/>
    <lineage>
        <taxon>Eukaryota</taxon>
        <taxon>Viridiplantae</taxon>
        <taxon>Streptophyta</taxon>
        <taxon>Embryophyta</taxon>
        <taxon>Tracheophyta</taxon>
        <taxon>Spermatophyta</taxon>
        <taxon>Magnoliopsida</taxon>
        <taxon>eudicotyledons</taxon>
        <taxon>Gunneridae</taxon>
        <taxon>Pentapetalae</taxon>
        <taxon>rosids</taxon>
        <taxon>malvids</taxon>
        <taxon>Brassicales</taxon>
        <taxon>Brassicaceae</taxon>
        <taxon>Camelineae</taxon>
        <taxon>Arabidopsis</taxon>
    </lineage>
</organism>
<accession>O80854</accession>
<sequence>MEIHHQLLVSLLFLLLPLCSSQENTRSLAIDVNGPVETSPISEKLNPKLVYEIKVHGFMLWAAMGVLMPIGIISIRLMSIKDQPIITLRRLFFLHVTSQMVAVILVTIGAVMSVINFNNSFSNHHQQLGIGLYVIVWFQALLGFLRPPREEKARRKWFVGHWILGTSIAILGIINIYTGLHAYAKKTSKSANLWTILFTAQLSCIALVYLFQDKWSYIQSQATFNRNQSVDHNSNISTAETGHGYEVEESKPELEKC</sequence>
<name>B561L_ARATH</name>
<keyword id="KW-0249">Electron transport</keyword>
<keyword id="KW-0349">Heme</keyword>
<keyword id="KW-0408">Iron</keyword>
<keyword id="KW-0472">Membrane</keyword>
<keyword id="KW-0479">Metal-binding</keyword>
<keyword id="KW-1185">Reference proteome</keyword>
<keyword id="KW-0732">Signal</keyword>
<keyword id="KW-0812">Transmembrane</keyword>
<keyword id="KW-1133">Transmembrane helix</keyword>
<keyword id="KW-0813">Transport</keyword>
<proteinExistence type="evidence at transcript level"/>
<feature type="signal peptide" evidence="2">
    <location>
        <begin position="1"/>
        <end position="21"/>
    </location>
</feature>
<feature type="chain" id="PRO_0000430480" description="Cytochrome b561 domain-containing protein At2g30890">
    <location>
        <begin position="22"/>
        <end position="257"/>
    </location>
</feature>
<feature type="transmembrane region" description="Helical; Name=1" evidence="2">
    <location>
        <begin position="55"/>
        <end position="75"/>
    </location>
</feature>
<feature type="transmembrane region" description="Helical; Name=2" evidence="2">
    <location>
        <begin position="91"/>
        <end position="111"/>
    </location>
</feature>
<feature type="transmembrane region" description="Helical; Name=3" evidence="2">
    <location>
        <begin position="125"/>
        <end position="145"/>
    </location>
</feature>
<feature type="transmembrane region" description="Helical; Name=4" evidence="2">
    <location>
        <begin position="157"/>
        <end position="177"/>
    </location>
</feature>
<feature type="transmembrane region" description="Helical; Name=5" evidence="2">
    <location>
        <begin position="191"/>
        <end position="211"/>
    </location>
</feature>
<feature type="domain" description="Cytochrome b561" evidence="3">
    <location>
        <begin position="22"/>
        <end position="219"/>
    </location>
</feature>
<feature type="region of interest" description="Disordered" evidence="4">
    <location>
        <begin position="235"/>
        <end position="257"/>
    </location>
</feature>
<feature type="compositionally biased region" description="Basic and acidic residues" evidence="4">
    <location>
        <begin position="243"/>
        <end position="257"/>
    </location>
</feature>
<feature type="binding site" description="axial binding residue" evidence="1">
    <location>
        <position position="56"/>
    </location>
    <ligand>
        <name>heme b</name>
        <dbReference type="ChEBI" id="CHEBI:60344"/>
        <label>1</label>
    </ligand>
    <ligandPart>
        <name>Fe</name>
        <dbReference type="ChEBI" id="CHEBI:18248"/>
    </ligandPart>
</feature>
<feature type="binding site" description="axial binding residue" evidence="1">
    <location>
        <position position="95"/>
    </location>
    <ligand>
        <name>heme b</name>
        <dbReference type="ChEBI" id="CHEBI:60344"/>
        <label>2</label>
    </ligand>
    <ligandPart>
        <name>Fe</name>
        <dbReference type="ChEBI" id="CHEBI:18248"/>
    </ligandPart>
</feature>
<feature type="binding site" description="axial binding residue" evidence="1">
    <location>
        <position position="125"/>
    </location>
    <ligand>
        <name>heme b</name>
        <dbReference type="ChEBI" id="CHEBI:60344"/>
        <label>1</label>
    </ligand>
    <ligandPart>
        <name>Fe</name>
        <dbReference type="ChEBI" id="CHEBI:18248"/>
    </ligandPart>
</feature>
<feature type="binding site" description="axial binding residue" evidence="1">
    <location>
        <position position="161"/>
    </location>
    <ligand>
        <name>heme b</name>
        <dbReference type="ChEBI" id="CHEBI:60344"/>
        <label>2</label>
    </ligand>
    <ligandPart>
        <name>Fe</name>
        <dbReference type="ChEBI" id="CHEBI:18248"/>
    </ligandPart>
</feature>
<reference key="1">
    <citation type="journal article" date="1999" name="Nature">
        <title>Sequence and analysis of chromosome 2 of the plant Arabidopsis thaliana.</title>
        <authorList>
            <person name="Lin X."/>
            <person name="Kaul S."/>
            <person name="Rounsley S.D."/>
            <person name="Shea T.P."/>
            <person name="Benito M.-I."/>
            <person name="Town C.D."/>
            <person name="Fujii C.Y."/>
            <person name="Mason T.M."/>
            <person name="Bowman C.L."/>
            <person name="Barnstead M.E."/>
            <person name="Feldblyum T.V."/>
            <person name="Buell C.R."/>
            <person name="Ketchum K.A."/>
            <person name="Lee J.J."/>
            <person name="Ronning C.M."/>
            <person name="Koo H.L."/>
            <person name="Moffat K.S."/>
            <person name="Cronin L.A."/>
            <person name="Shen M."/>
            <person name="Pai G."/>
            <person name="Van Aken S."/>
            <person name="Umayam L."/>
            <person name="Tallon L.J."/>
            <person name="Gill J.E."/>
            <person name="Adams M.D."/>
            <person name="Carrera A.J."/>
            <person name="Creasy T.H."/>
            <person name="Goodman H.M."/>
            <person name="Somerville C.R."/>
            <person name="Copenhaver G.P."/>
            <person name="Preuss D."/>
            <person name="Nierman W.C."/>
            <person name="White O."/>
            <person name="Eisen J.A."/>
            <person name="Salzberg S.L."/>
            <person name="Fraser C.M."/>
            <person name="Venter J.C."/>
        </authorList>
    </citation>
    <scope>NUCLEOTIDE SEQUENCE [LARGE SCALE GENOMIC DNA]</scope>
    <source>
        <strain>cv. Columbia</strain>
    </source>
</reference>
<reference key="2">
    <citation type="journal article" date="2017" name="Plant J.">
        <title>Araport11: a complete reannotation of the Arabidopsis thaliana reference genome.</title>
        <authorList>
            <person name="Cheng C.Y."/>
            <person name="Krishnakumar V."/>
            <person name="Chan A.P."/>
            <person name="Thibaud-Nissen F."/>
            <person name="Schobel S."/>
            <person name="Town C.D."/>
        </authorList>
    </citation>
    <scope>GENOME REANNOTATION</scope>
    <source>
        <strain>cv. Columbia</strain>
    </source>
</reference>
<reference key="3">
    <citation type="journal article" date="2003" name="Science">
        <title>Empirical analysis of transcriptional activity in the Arabidopsis genome.</title>
        <authorList>
            <person name="Yamada K."/>
            <person name="Lim J."/>
            <person name="Dale J.M."/>
            <person name="Chen H."/>
            <person name="Shinn P."/>
            <person name="Palm C.J."/>
            <person name="Southwick A.M."/>
            <person name="Wu H.C."/>
            <person name="Kim C.J."/>
            <person name="Nguyen M."/>
            <person name="Pham P.K."/>
            <person name="Cheuk R.F."/>
            <person name="Karlin-Newmann G."/>
            <person name="Liu S.X."/>
            <person name="Lam B."/>
            <person name="Sakano H."/>
            <person name="Wu T."/>
            <person name="Yu G."/>
            <person name="Miranda M."/>
            <person name="Quach H.L."/>
            <person name="Tripp M."/>
            <person name="Chang C.H."/>
            <person name="Lee J.M."/>
            <person name="Toriumi M.J."/>
            <person name="Chan M.M."/>
            <person name="Tang C.C."/>
            <person name="Onodera C.S."/>
            <person name="Deng J.M."/>
            <person name="Akiyama K."/>
            <person name="Ansari Y."/>
            <person name="Arakawa T."/>
            <person name="Banh J."/>
            <person name="Banno F."/>
            <person name="Bowser L."/>
            <person name="Brooks S.Y."/>
            <person name="Carninci P."/>
            <person name="Chao Q."/>
            <person name="Choy N."/>
            <person name="Enju A."/>
            <person name="Goldsmith A.D."/>
            <person name="Gurjal M."/>
            <person name="Hansen N.F."/>
            <person name="Hayashizaki Y."/>
            <person name="Johnson-Hopson C."/>
            <person name="Hsuan V.W."/>
            <person name="Iida K."/>
            <person name="Karnes M."/>
            <person name="Khan S."/>
            <person name="Koesema E."/>
            <person name="Ishida J."/>
            <person name="Jiang P.X."/>
            <person name="Jones T."/>
            <person name="Kawai J."/>
            <person name="Kamiya A."/>
            <person name="Meyers C."/>
            <person name="Nakajima M."/>
            <person name="Narusaka M."/>
            <person name="Seki M."/>
            <person name="Sakurai T."/>
            <person name="Satou M."/>
            <person name="Tamse R."/>
            <person name="Vaysberg M."/>
            <person name="Wallender E.K."/>
            <person name="Wong C."/>
            <person name="Yamamura Y."/>
            <person name="Yuan S."/>
            <person name="Shinozaki K."/>
            <person name="Davis R.W."/>
            <person name="Theologis A."/>
            <person name="Ecker J.R."/>
        </authorList>
    </citation>
    <scope>NUCLEOTIDE SEQUENCE [LARGE SCALE MRNA]</scope>
    <source>
        <strain>cv. Columbia</strain>
    </source>
</reference>
<reference key="4">
    <citation type="submission" date="2004-09" db="EMBL/GenBank/DDBJ databases">
        <title>Large-scale analysis of RIKEN Arabidopsis full-length (RAFL) cDNAs.</title>
        <authorList>
            <person name="Totoki Y."/>
            <person name="Seki M."/>
            <person name="Ishida J."/>
            <person name="Nakajima M."/>
            <person name="Enju A."/>
            <person name="Kamiya A."/>
            <person name="Narusaka M."/>
            <person name="Shin-i T."/>
            <person name="Nakagawa M."/>
            <person name="Sakamoto N."/>
            <person name="Oishi K."/>
            <person name="Kohara Y."/>
            <person name="Kobayashi M."/>
            <person name="Toyoda A."/>
            <person name="Sakaki Y."/>
            <person name="Sakurai T."/>
            <person name="Iida K."/>
            <person name="Akiyama K."/>
            <person name="Satou M."/>
            <person name="Toyoda T."/>
            <person name="Konagaya A."/>
            <person name="Carninci P."/>
            <person name="Kawai J."/>
            <person name="Hayashizaki Y."/>
            <person name="Shinozaki K."/>
        </authorList>
    </citation>
    <scope>NUCLEOTIDE SEQUENCE [LARGE SCALE MRNA]</scope>
    <source>
        <strain>cv. Columbia</strain>
    </source>
</reference>
<reference key="5">
    <citation type="journal article" date="2005" name="Biochim. Biophys. Acta">
        <title>Cytochrome b561 protein family: expanding roles and versatile transmembrane electron transfer abilities as predicted by a new classification system and protein sequence motif analyses.</title>
        <authorList>
            <person name="Tsubaki M."/>
            <person name="Takeuchi F."/>
            <person name="Nakanishi N."/>
        </authorList>
    </citation>
    <scope>GENE FAMILY</scope>
    <scope>NOMENCLATURE</scope>
</reference>
<reference key="6">
    <citation type="journal article" date="2013" name="Antioxid. Redox Signal.">
        <title>Cytochromes b561: ascorbate-mediated trans-membrane electron transport.</title>
        <authorList>
            <person name="Asard H."/>
            <person name="Barbaro R."/>
            <person name="Trost P."/>
            <person name="Berczi A."/>
        </authorList>
    </citation>
    <scope>REVIEW</scope>
</reference>